<reference key="1">
    <citation type="journal article" date="2007" name="PLoS ONE">
        <title>Complete genomic characterization of a pathogenic A.II strain of Francisella tularensis subspecies tularensis.</title>
        <authorList>
            <person name="Beckstrom-Sternberg S.M."/>
            <person name="Auerbach R.K."/>
            <person name="Godbole S."/>
            <person name="Pearson J.V."/>
            <person name="Beckstrom-Sternberg J.S."/>
            <person name="Deng Z."/>
            <person name="Munk C."/>
            <person name="Kubota K."/>
            <person name="Zhou Y."/>
            <person name="Bruce D."/>
            <person name="Noronha J."/>
            <person name="Scheuermann R.H."/>
            <person name="Wang A."/>
            <person name="Wei X."/>
            <person name="Wang J."/>
            <person name="Hao J."/>
            <person name="Wagner D.M."/>
            <person name="Brettin T.S."/>
            <person name="Brown N."/>
            <person name="Gilna P."/>
            <person name="Keim P.S."/>
        </authorList>
    </citation>
    <scope>NUCLEOTIDE SEQUENCE [LARGE SCALE GENOMIC DNA]</scope>
    <source>
        <strain>WY96-3418</strain>
    </source>
</reference>
<protein>
    <recommendedName>
        <fullName evidence="1">Pyridoxal 5'-phosphate synthase subunit PdxT</fullName>
        <ecNumber evidence="1">4.3.3.6</ecNumber>
    </recommendedName>
    <alternativeName>
        <fullName evidence="1">Pdx2</fullName>
    </alternativeName>
    <alternativeName>
        <fullName evidence="1">Pyridoxal 5'-phosphate synthase glutaminase subunit</fullName>
        <ecNumber evidence="1">3.5.1.2</ecNumber>
    </alternativeName>
</protein>
<name>PDXT_FRATW</name>
<keyword id="KW-0315">Glutamine amidotransferase</keyword>
<keyword id="KW-0378">Hydrolase</keyword>
<keyword id="KW-0456">Lyase</keyword>
<keyword id="KW-0663">Pyridoxal phosphate</keyword>
<gene>
    <name evidence="1" type="primary">pdxT</name>
    <name type="ordered locus">FTW_1553</name>
</gene>
<comment type="function">
    <text evidence="1">Catalyzes the hydrolysis of glutamine to glutamate and ammonia as part of the biosynthesis of pyridoxal 5'-phosphate. The resulting ammonia molecule is channeled to the active site of PdxS.</text>
</comment>
<comment type="catalytic activity">
    <reaction evidence="1">
        <text>aldehydo-D-ribose 5-phosphate + D-glyceraldehyde 3-phosphate + L-glutamine = pyridoxal 5'-phosphate + L-glutamate + phosphate + 3 H2O + H(+)</text>
        <dbReference type="Rhea" id="RHEA:31507"/>
        <dbReference type="ChEBI" id="CHEBI:15377"/>
        <dbReference type="ChEBI" id="CHEBI:15378"/>
        <dbReference type="ChEBI" id="CHEBI:29985"/>
        <dbReference type="ChEBI" id="CHEBI:43474"/>
        <dbReference type="ChEBI" id="CHEBI:58273"/>
        <dbReference type="ChEBI" id="CHEBI:58359"/>
        <dbReference type="ChEBI" id="CHEBI:59776"/>
        <dbReference type="ChEBI" id="CHEBI:597326"/>
        <dbReference type="EC" id="4.3.3.6"/>
    </reaction>
</comment>
<comment type="catalytic activity">
    <reaction evidence="1">
        <text>L-glutamine + H2O = L-glutamate + NH4(+)</text>
        <dbReference type="Rhea" id="RHEA:15889"/>
        <dbReference type="ChEBI" id="CHEBI:15377"/>
        <dbReference type="ChEBI" id="CHEBI:28938"/>
        <dbReference type="ChEBI" id="CHEBI:29985"/>
        <dbReference type="ChEBI" id="CHEBI:58359"/>
        <dbReference type="EC" id="3.5.1.2"/>
    </reaction>
</comment>
<comment type="pathway">
    <text evidence="1">Cofactor biosynthesis; pyridoxal 5'-phosphate biosynthesis.</text>
</comment>
<comment type="subunit">
    <text evidence="1">In the presence of PdxS, forms a dodecamer of heterodimers. Only shows activity in the heterodimer.</text>
</comment>
<comment type="similarity">
    <text evidence="1">Belongs to the glutaminase PdxT/SNO family.</text>
</comment>
<accession>A4IZB4</accession>
<sequence>MTQKVGVLAIQGGYQKHADMFKSLGVEVKLVKFNNDFDSIDRLVIPGGESTTLLNLLNKHQIFDKLYNFCSSKPVFGTCAGSIILSKGEGYLNLLDLEVQRNAYGRQVDSFVADISFNDKNITGVFIRAPKFIVVGNQVDILSKYQNSPVLLRQANILVSSFHPELTQDPTIHEYFLAM</sequence>
<dbReference type="EC" id="4.3.3.6" evidence="1"/>
<dbReference type="EC" id="3.5.1.2" evidence="1"/>
<dbReference type="EMBL" id="CP000608">
    <property type="protein sequence ID" value="ABO47264.1"/>
    <property type="molecule type" value="Genomic_DNA"/>
</dbReference>
<dbReference type="RefSeq" id="WP_003026851.1">
    <property type="nucleotide sequence ID" value="NC_009257.1"/>
</dbReference>
<dbReference type="SMR" id="A4IZB4"/>
<dbReference type="MEROPS" id="C26.A32"/>
<dbReference type="KEGG" id="ftw:FTW_1553"/>
<dbReference type="HOGENOM" id="CLU_069674_2_0_6"/>
<dbReference type="UniPathway" id="UPA00245"/>
<dbReference type="GO" id="GO:0005829">
    <property type="term" value="C:cytosol"/>
    <property type="evidence" value="ECO:0007669"/>
    <property type="project" value="TreeGrafter"/>
</dbReference>
<dbReference type="GO" id="GO:1903600">
    <property type="term" value="C:glutaminase complex"/>
    <property type="evidence" value="ECO:0007669"/>
    <property type="project" value="TreeGrafter"/>
</dbReference>
<dbReference type="GO" id="GO:0004359">
    <property type="term" value="F:glutaminase activity"/>
    <property type="evidence" value="ECO:0007669"/>
    <property type="project" value="UniProtKB-UniRule"/>
</dbReference>
<dbReference type="GO" id="GO:0036381">
    <property type="term" value="F:pyridoxal 5'-phosphate synthase (glutamine hydrolysing) activity"/>
    <property type="evidence" value="ECO:0007669"/>
    <property type="project" value="UniProtKB-UniRule"/>
</dbReference>
<dbReference type="GO" id="GO:0006543">
    <property type="term" value="P:glutamine catabolic process"/>
    <property type="evidence" value="ECO:0007669"/>
    <property type="project" value="UniProtKB-UniRule"/>
</dbReference>
<dbReference type="GO" id="GO:0042823">
    <property type="term" value="P:pyridoxal phosphate biosynthetic process"/>
    <property type="evidence" value="ECO:0007669"/>
    <property type="project" value="UniProtKB-UniRule"/>
</dbReference>
<dbReference type="GO" id="GO:0008614">
    <property type="term" value="P:pyridoxine metabolic process"/>
    <property type="evidence" value="ECO:0007669"/>
    <property type="project" value="TreeGrafter"/>
</dbReference>
<dbReference type="CDD" id="cd01749">
    <property type="entry name" value="GATase1_PB"/>
    <property type="match status" value="1"/>
</dbReference>
<dbReference type="Gene3D" id="3.40.50.880">
    <property type="match status" value="1"/>
</dbReference>
<dbReference type="HAMAP" id="MF_01615">
    <property type="entry name" value="PdxT"/>
    <property type="match status" value="1"/>
</dbReference>
<dbReference type="InterPro" id="IPR029062">
    <property type="entry name" value="Class_I_gatase-like"/>
</dbReference>
<dbReference type="InterPro" id="IPR002161">
    <property type="entry name" value="PdxT/SNO"/>
</dbReference>
<dbReference type="InterPro" id="IPR021196">
    <property type="entry name" value="PdxT/SNO_CS"/>
</dbReference>
<dbReference type="NCBIfam" id="TIGR03800">
    <property type="entry name" value="PLP_synth_Pdx2"/>
    <property type="match status" value="1"/>
</dbReference>
<dbReference type="NCBIfam" id="NF010050">
    <property type="entry name" value="PRK13526.1"/>
    <property type="match status" value="1"/>
</dbReference>
<dbReference type="PANTHER" id="PTHR31559">
    <property type="entry name" value="PYRIDOXAL 5'-PHOSPHATE SYNTHASE SUBUNIT SNO"/>
    <property type="match status" value="1"/>
</dbReference>
<dbReference type="PANTHER" id="PTHR31559:SF0">
    <property type="entry name" value="PYRIDOXAL 5'-PHOSPHATE SYNTHASE SUBUNIT SNO1-RELATED"/>
    <property type="match status" value="1"/>
</dbReference>
<dbReference type="Pfam" id="PF01174">
    <property type="entry name" value="SNO"/>
    <property type="match status" value="1"/>
</dbReference>
<dbReference type="PIRSF" id="PIRSF005639">
    <property type="entry name" value="Glut_amidoT_SNO"/>
    <property type="match status" value="1"/>
</dbReference>
<dbReference type="SUPFAM" id="SSF52317">
    <property type="entry name" value="Class I glutamine amidotransferase-like"/>
    <property type="match status" value="1"/>
</dbReference>
<dbReference type="PROSITE" id="PS01236">
    <property type="entry name" value="PDXT_SNO_1"/>
    <property type="match status" value="1"/>
</dbReference>
<dbReference type="PROSITE" id="PS51130">
    <property type="entry name" value="PDXT_SNO_2"/>
    <property type="match status" value="1"/>
</dbReference>
<organism>
    <name type="scientific">Francisella tularensis subsp. tularensis (strain WY96-3418)</name>
    <dbReference type="NCBI Taxonomy" id="418136"/>
    <lineage>
        <taxon>Bacteria</taxon>
        <taxon>Pseudomonadati</taxon>
        <taxon>Pseudomonadota</taxon>
        <taxon>Gammaproteobacteria</taxon>
        <taxon>Thiotrichales</taxon>
        <taxon>Francisellaceae</taxon>
        <taxon>Francisella</taxon>
    </lineage>
</organism>
<feature type="chain" id="PRO_0000293000" description="Pyridoxal 5'-phosphate synthase subunit PdxT">
    <location>
        <begin position="1"/>
        <end position="179"/>
    </location>
</feature>
<feature type="active site" description="Nucleophile" evidence="1">
    <location>
        <position position="79"/>
    </location>
</feature>
<feature type="active site" description="Charge relay system" evidence="1">
    <location>
        <position position="163"/>
    </location>
</feature>
<feature type="active site" description="Charge relay system" evidence="1">
    <location>
        <position position="165"/>
    </location>
</feature>
<feature type="binding site" evidence="1">
    <location>
        <begin position="48"/>
        <end position="50"/>
    </location>
    <ligand>
        <name>L-glutamine</name>
        <dbReference type="ChEBI" id="CHEBI:58359"/>
    </ligand>
</feature>
<feature type="binding site" evidence="1">
    <location>
        <position position="101"/>
    </location>
    <ligand>
        <name>L-glutamine</name>
        <dbReference type="ChEBI" id="CHEBI:58359"/>
    </ligand>
</feature>
<feature type="binding site" evidence="1">
    <location>
        <begin position="127"/>
        <end position="128"/>
    </location>
    <ligand>
        <name>L-glutamine</name>
        <dbReference type="ChEBI" id="CHEBI:58359"/>
    </ligand>
</feature>
<proteinExistence type="inferred from homology"/>
<evidence type="ECO:0000255" key="1">
    <source>
        <dbReference type="HAMAP-Rule" id="MF_01615"/>
    </source>
</evidence>